<protein>
    <recommendedName>
        <fullName>Transcription factor HIVEP2</fullName>
    </recommendedName>
    <alternativeName>
        <fullName>Human immunodeficiency virus type I enhancer-binding protein 2 homolog</fullName>
    </alternativeName>
    <alternativeName>
        <fullName>Myc intron-binding protein 1</fullName>
        <shortName>MIBP-1</shortName>
    </alternativeName>
</protein>
<keyword id="KW-0238">DNA-binding</keyword>
<keyword id="KW-0479">Metal-binding</keyword>
<keyword id="KW-0539">Nucleus</keyword>
<keyword id="KW-0597">Phosphoprotein</keyword>
<keyword id="KW-1185">Reference proteome</keyword>
<keyword id="KW-0677">Repeat</keyword>
<keyword id="KW-0804">Transcription</keyword>
<keyword id="KW-0805">Transcription regulation</keyword>
<keyword id="KW-0862">Zinc</keyword>
<keyword id="KW-0863">Zinc-finger</keyword>
<feature type="chain" id="PRO_0000047372" description="Transcription factor HIVEP2">
    <location>
        <begin position="1"/>
        <end position="2430"/>
    </location>
</feature>
<feature type="repeat" description="1">
    <location>
        <begin position="2037"/>
        <end position="2040"/>
    </location>
</feature>
<feature type="repeat" description="2">
    <location>
        <begin position="2043"/>
        <end position="2046"/>
    </location>
</feature>
<feature type="repeat" description="3">
    <location>
        <begin position="2055"/>
        <end position="2058"/>
    </location>
</feature>
<feature type="repeat" description="4">
    <location>
        <begin position="2067"/>
        <end position="2070"/>
    </location>
</feature>
<feature type="repeat" description="5">
    <location>
        <begin position="2073"/>
        <end position="2076"/>
    </location>
</feature>
<feature type="repeat" description="6">
    <location>
        <begin position="2090"/>
        <end position="2093"/>
    </location>
</feature>
<feature type="repeat" description="7">
    <location>
        <begin position="2096"/>
        <end position="2099"/>
    </location>
</feature>
<feature type="repeat" description="8">
    <location>
        <begin position="2102"/>
        <end position="2105"/>
    </location>
</feature>
<feature type="repeat" description="9">
    <location>
        <begin position="2114"/>
        <end position="2117"/>
    </location>
</feature>
<feature type="repeat" description="10">
    <location>
        <begin position="2129"/>
        <end position="2132"/>
    </location>
</feature>
<feature type="zinc finger region" description="C2H2-type 1" evidence="5">
    <location>
        <begin position="189"/>
        <end position="211"/>
    </location>
</feature>
<feature type="zinc finger region" description="C2H2-type 2" evidence="5">
    <location>
        <begin position="217"/>
        <end position="239"/>
    </location>
</feature>
<feature type="zinc finger region" description="C2H2-type 3" evidence="5">
    <location>
        <begin position="1783"/>
        <end position="1805"/>
    </location>
</feature>
<feature type="zinc finger region" description="C2H2-type 4" evidence="5">
    <location>
        <begin position="1811"/>
        <end position="1835"/>
    </location>
</feature>
<feature type="region of interest" description="Disordered" evidence="6">
    <location>
        <begin position="1"/>
        <end position="127"/>
    </location>
</feature>
<feature type="region of interest" description="Disordered" evidence="6">
    <location>
        <begin position="271"/>
        <end position="302"/>
    </location>
</feature>
<feature type="region of interest" description="Disordered" evidence="6">
    <location>
        <begin position="374"/>
        <end position="418"/>
    </location>
</feature>
<feature type="region of interest" description="Disordered" evidence="6">
    <location>
        <begin position="744"/>
        <end position="995"/>
    </location>
</feature>
<feature type="region of interest" description="Disordered" evidence="6">
    <location>
        <begin position="1472"/>
        <end position="1584"/>
    </location>
</feature>
<feature type="region of interest" description="Disordered" evidence="6">
    <location>
        <begin position="1848"/>
        <end position="1931"/>
    </location>
</feature>
<feature type="region of interest" description="Disordered" evidence="6">
    <location>
        <begin position="1986"/>
        <end position="2117"/>
    </location>
</feature>
<feature type="region of interest" description="10 X 4 AA tandem repeats of S-P-[RGMKC]-[RK]">
    <location>
        <begin position="2037"/>
        <end position="2132"/>
    </location>
</feature>
<feature type="region of interest" description="Disordered" evidence="6">
    <location>
        <begin position="2226"/>
        <end position="2252"/>
    </location>
</feature>
<feature type="region of interest" description="Disordered" evidence="6">
    <location>
        <begin position="2268"/>
        <end position="2309"/>
    </location>
</feature>
<feature type="region of interest" description="Disordered" evidence="6">
    <location>
        <begin position="2352"/>
        <end position="2430"/>
    </location>
</feature>
<feature type="short sequence motif" description="Nuclear localization signal" evidence="4">
    <location>
        <begin position="929"/>
        <end position="935"/>
    </location>
</feature>
<feature type="compositionally biased region" description="Polar residues" evidence="6">
    <location>
        <begin position="11"/>
        <end position="22"/>
    </location>
</feature>
<feature type="compositionally biased region" description="Polar residues" evidence="6">
    <location>
        <begin position="96"/>
        <end position="110"/>
    </location>
</feature>
<feature type="compositionally biased region" description="Polar residues" evidence="6">
    <location>
        <begin position="381"/>
        <end position="418"/>
    </location>
</feature>
<feature type="compositionally biased region" description="Basic and acidic residues" evidence="6">
    <location>
        <begin position="744"/>
        <end position="753"/>
    </location>
</feature>
<feature type="compositionally biased region" description="Basic and acidic residues" evidence="6">
    <location>
        <begin position="775"/>
        <end position="784"/>
    </location>
</feature>
<feature type="compositionally biased region" description="Polar residues" evidence="6">
    <location>
        <begin position="792"/>
        <end position="804"/>
    </location>
</feature>
<feature type="compositionally biased region" description="Polar residues" evidence="6">
    <location>
        <begin position="853"/>
        <end position="863"/>
    </location>
</feature>
<feature type="compositionally biased region" description="Basic and acidic residues" evidence="6">
    <location>
        <begin position="884"/>
        <end position="908"/>
    </location>
</feature>
<feature type="compositionally biased region" description="Low complexity" evidence="6">
    <location>
        <begin position="944"/>
        <end position="974"/>
    </location>
</feature>
<feature type="compositionally biased region" description="Low complexity" evidence="6">
    <location>
        <begin position="1499"/>
        <end position="1520"/>
    </location>
</feature>
<feature type="compositionally biased region" description="Low complexity" evidence="6">
    <location>
        <begin position="1560"/>
        <end position="1569"/>
    </location>
</feature>
<feature type="compositionally biased region" description="Acidic residues" evidence="6">
    <location>
        <begin position="1850"/>
        <end position="1860"/>
    </location>
</feature>
<feature type="compositionally biased region" description="Basic and acidic residues" evidence="6">
    <location>
        <begin position="1861"/>
        <end position="1871"/>
    </location>
</feature>
<feature type="compositionally biased region" description="Acidic residues" evidence="6">
    <location>
        <begin position="1883"/>
        <end position="1909"/>
    </location>
</feature>
<feature type="compositionally biased region" description="Basic and acidic residues" evidence="6">
    <location>
        <begin position="1991"/>
        <end position="2001"/>
    </location>
</feature>
<feature type="compositionally biased region" description="Low complexity" evidence="6">
    <location>
        <begin position="2013"/>
        <end position="2037"/>
    </location>
</feature>
<feature type="compositionally biased region" description="Basic and acidic residues" evidence="6">
    <location>
        <begin position="2062"/>
        <end position="2085"/>
    </location>
</feature>
<feature type="compositionally biased region" description="Basic and acidic residues" evidence="6">
    <location>
        <begin position="2107"/>
        <end position="2116"/>
    </location>
</feature>
<feature type="compositionally biased region" description="Low complexity" evidence="6">
    <location>
        <begin position="2271"/>
        <end position="2289"/>
    </location>
</feature>
<feature type="compositionally biased region" description="Polar residues" evidence="6">
    <location>
        <begin position="2291"/>
        <end position="2301"/>
    </location>
</feature>
<feature type="compositionally biased region" description="Basic and acidic residues" evidence="6">
    <location>
        <begin position="2371"/>
        <end position="2380"/>
    </location>
</feature>
<feature type="compositionally biased region" description="Polar residues" evidence="6">
    <location>
        <begin position="2406"/>
        <end position="2417"/>
    </location>
</feature>
<feature type="modified residue" description="Phosphoserine" evidence="3">
    <location>
        <position position="811"/>
    </location>
</feature>
<feature type="modified residue" description="Phosphoserine" evidence="9">
    <location>
        <position position="942"/>
    </location>
</feature>
<feature type="modified residue" description="Phosphoserine" evidence="9">
    <location>
        <position position="947"/>
    </location>
</feature>
<feature type="modified residue" description="Phosphoserine" evidence="9">
    <location>
        <position position="1040"/>
    </location>
</feature>
<feature type="modified residue" description="Phosphoserine" evidence="9">
    <location>
        <position position="1431"/>
    </location>
</feature>
<feature type="modified residue" description="Phosphoserine" evidence="9">
    <location>
        <position position="1435"/>
    </location>
</feature>
<feature type="modified residue" description="Phosphoserine" evidence="2">
    <location>
        <position position="2102"/>
    </location>
</feature>
<feature type="modified residue" description="Phosphoserine" evidence="2">
    <location>
        <position position="2281"/>
    </location>
</feature>
<feature type="modified residue" description="Phosphoserine" evidence="2">
    <location>
        <position position="2285"/>
    </location>
</feature>
<feature type="modified residue" description="Phosphoserine" evidence="9">
    <location>
        <position position="2413"/>
    </location>
</feature>
<feature type="modified residue" description="Phosphoserine" evidence="9">
    <location>
        <position position="2415"/>
    </location>
</feature>
<feature type="sequence conflict" description="In Ref. 1; CAA75868." evidence="8" ref="1">
    <original>G</original>
    <variation>E</variation>
    <location>
        <position position="572"/>
    </location>
</feature>
<feature type="sequence conflict" description="In Ref. 1; CAA75868." evidence="8" ref="1">
    <original>S</original>
    <variation>P</variation>
    <location>
        <position position="661"/>
    </location>
</feature>
<feature type="sequence conflict" description="In Ref. 1; CAA75868." evidence="8" ref="1">
    <original>D</original>
    <variation>N</variation>
    <location>
        <position position="749"/>
    </location>
</feature>
<feature type="sequence conflict" description="In Ref. 1; CAA75868." evidence="8" ref="1">
    <original>S</original>
    <variation>G</variation>
    <location>
        <position position="762"/>
    </location>
</feature>
<feature type="sequence conflict" description="In Ref. 1; CAA75868." evidence="8" ref="1">
    <original>S</original>
    <variation>P</variation>
    <location>
        <position position="1112"/>
    </location>
</feature>
<feature type="sequence conflict" description="In Ref. 1; CAA75868." evidence="8" ref="1">
    <original>P</original>
    <variation>S</variation>
    <location>
        <position position="1211"/>
    </location>
</feature>
<feature type="sequence conflict" description="In Ref. 1; CAA75868." evidence="8" ref="1">
    <original>A</original>
    <variation>G</variation>
    <location>
        <position position="1223"/>
    </location>
</feature>
<feature type="sequence conflict" description="In Ref. 1; CAA75868." evidence="8" ref="1">
    <original>C</original>
    <variation>S</variation>
    <location>
        <position position="1496"/>
    </location>
</feature>
<feature type="sequence conflict" description="In Ref. 2; BAE23294." evidence="8" ref="2">
    <original>D</original>
    <variation>E</variation>
    <location>
        <position position="2001"/>
    </location>
</feature>
<feature type="sequence conflict" description="In Ref. 1; CAA75868." evidence="8" ref="1">
    <original>P</original>
    <variation>A</variation>
    <location>
        <position position="2091"/>
    </location>
</feature>
<feature type="sequence conflict" description="In Ref. 1; CAA75868." evidence="8" ref="1">
    <original>M</original>
    <variation>L</variation>
    <location>
        <position position="2122"/>
    </location>
</feature>
<feature type="sequence conflict" description="In Ref. 2; BAE23336." evidence="8" ref="2">
    <original>S</original>
    <variation>C</variation>
    <location>
        <position position="2263"/>
    </location>
</feature>
<feature type="sequence conflict" description="In Ref. 2; BAE23294." evidence="8" ref="2">
    <original>T</original>
    <variation>A</variation>
    <location>
        <position position="2294"/>
    </location>
</feature>
<feature type="sequence conflict" description="In Ref. 1; CAA75868." evidence="8" ref="1">
    <original>T</original>
    <variation>A</variation>
    <location>
        <position position="2314"/>
    </location>
</feature>
<name>ZEP2_MOUSE</name>
<accession>Q3UHF7</accession>
<accession>O55140</accession>
<accession>Q3UVD4</accession>
<accession>Q3UVH5</accession>
<reference key="1">
    <citation type="journal article" date="1999" name="Mol. Cell. Biol.">
        <title>Activation of somatostatin receptor II expression by transcription factors MIBP1 and SEF-2 in the murine brain.</title>
        <authorList>
            <person name="Doerflinger U."/>
            <person name="Pscherer A."/>
            <person name="Moser M."/>
            <person name="Ruemmele P."/>
            <person name="Schuele R."/>
            <person name="Buettner R."/>
        </authorList>
    </citation>
    <scope>NUCLEOTIDE SEQUENCE [MRNA]</scope>
    <scope>FUNCTION</scope>
    <scope>INTERACTION WITH TCF4</scope>
    <scope>TISSUE SPECIFICITY</scope>
    <scope>DEVELOPMENTAL STAGE</scope>
    <source>
        <tissue>Brain</tissue>
    </source>
</reference>
<reference key="2">
    <citation type="journal article" date="2005" name="Science">
        <title>The transcriptional landscape of the mammalian genome.</title>
        <authorList>
            <person name="Carninci P."/>
            <person name="Kasukawa T."/>
            <person name="Katayama S."/>
            <person name="Gough J."/>
            <person name="Frith M.C."/>
            <person name="Maeda N."/>
            <person name="Oyama R."/>
            <person name="Ravasi T."/>
            <person name="Lenhard B."/>
            <person name="Wells C."/>
            <person name="Kodzius R."/>
            <person name="Shimokawa K."/>
            <person name="Bajic V.B."/>
            <person name="Brenner S.E."/>
            <person name="Batalov S."/>
            <person name="Forrest A.R."/>
            <person name="Zavolan M."/>
            <person name="Davis M.J."/>
            <person name="Wilming L.G."/>
            <person name="Aidinis V."/>
            <person name="Allen J.E."/>
            <person name="Ambesi-Impiombato A."/>
            <person name="Apweiler R."/>
            <person name="Aturaliya R.N."/>
            <person name="Bailey T.L."/>
            <person name="Bansal M."/>
            <person name="Baxter L."/>
            <person name="Beisel K.W."/>
            <person name="Bersano T."/>
            <person name="Bono H."/>
            <person name="Chalk A.M."/>
            <person name="Chiu K.P."/>
            <person name="Choudhary V."/>
            <person name="Christoffels A."/>
            <person name="Clutterbuck D.R."/>
            <person name="Crowe M.L."/>
            <person name="Dalla E."/>
            <person name="Dalrymple B.P."/>
            <person name="de Bono B."/>
            <person name="Della Gatta G."/>
            <person name="di Bernardo D."/>
            <person name="Down T."/>
            <person name="Engstrom P."/>
            <person name="Fagiolini M."/>
            <person name="Faulkner G."/>
            <person name="Fletcher C.F."/>
            <person name="Fukushima T."/>
            <person name="Furuno M."/>
            <person name="Futaki S."/>
            <person name="Gariboldi M."/>
            <person name="Georgii-Hemming P."/>
            <person name="Gingeras T.R."/>
            <person name="Gojobori T."/>
            <person name="Green R.E."/>
            <person name="Gustincich S."/>
            <person name="Harbers M."/>
            <person name="Hayashi Y."/>
            <person name="Hensch T.K."/>
            <person name="Hirokawa N."/>
            <person name="Hill D."/>
            <person name="Huminiecki L."/>
            <person name="Iacono M."/>
            <person name="Ikeo K."/>
            <person name="Iwama A."/>
            <person name="Ishikawa T."/>
            <person name="Jakt M."/>
            <person name="Kanapin A."/>
            <person name="Katoh M."/>
            <person name="Kawasawa Y."/>
            <person name="Kelso J."/>
            <person name="Kitamura H."/>
            <person name="Kitano H."/>
            <person name="Kollias G."/>
            <person name="Krishnan S.P."/>
            <person name="Kruger A."/>
            <person name="Kummerfeld S.K."/>
            <person name="Kurochkin I.V."/>
            <person name="Lareau L.F."/>
            <person name="Lazarevic D."/>
            <person name="Lipovich L."/>
            <person name="Liu J."/>
            <person name="Liuni S."/>
            <person name="McWilliam S."/>
            <person name="Madan Babu M."/>
            <person name="Madera M."/>
            <person name="Marchionni L."/>
            <person name="Matsuda H."/>
            <person name="Matsuzawa S."/>
            <person name="Miki H."/>
            <person name="Mignone F."/>
            <person name="Miyake S."/>
            <person name="Morris K."/>
            <person name="Mottagui-Tabar S."/>
            <person name="Mulder N."/>
            <person name="Nakano N."/>
            <person name="Nakauchi H."/>
            <person name="Ng P."/>
            <person name="Nilsson R."/>
            <person name="Nishiguchi S."/>
            <person name="Nishikawa S."/>
            <person name="Nori F."/>
            <person name="Ohara O."/>
            <person name="Okazaki Y."/>
            <person name="Orlando V."/>
            <person name="Pang K.C."/>
            <person name="Pavan W.J."/>
            <person name="Pavesi G."/>
            <person name="Pesole G."/>
            <person name="Petrovsky N."/>
            <person name="Piazza S."/>
            <person name="Reed J."/>
            <person name="Reid J.F."/>
            <person name="Ring B.Z."/>
            <person name="Ringwald M."/>
            <person name="Rost B."/>
            <person name="Ruan Y."/>
            <person name="Salzberg S.L."/>
            <person name="Sandelin A."/>
            <person name="Schneider C."/>
            <person name="Schoenbach C."/>
            <person name="Sekiguchi K."/>
            <person name="Semple C.A."/>
            <person name="Seno S."/>
            <person name="Sessa L."/>
            <person name="Sheng Y."/>
            <person name="Shibata Y."/>
            <person name="Shimada H."/>
            <person name="Shimada K."/>
            <person name="Silva D."/>
            <person name="Sinclair B."/>
            <person name="Sperling S."/>
            <person name="Stupka E."/>
            <person name="Sugiura K."/>
            <person name="Sultana R."/>
            <person name="Takenaka Y."/>
            <person name="Taki K."/>
            <person name="Tammoja K."/>
            <person name="Tan S.L."/>
            <person name="Tang S."/>
            <person name="Taylor M.S."/>
            <person name="Tegner J."/>
            <person name="Teichmann S.A."/>
            <person name="Ueda H.R."/>
            <person name="van Nimwegen E."/>
            <person name="Verardo R."/>
            <person name="Wei C.L."/>
            <person name="Yagi K."/>
            <person name="Yamanishi H."/>
            <person name="Zabarovsky E."/>
            <person name="Zhu S."/>
            <person name="Zimmer A."/>
            <person name="Hide W."/>
            <person name="Bult C."/>
            <person name="Grimmond S.M."/>
            <person name="Teasdale R.D."/>
            <person name="Liu E.T."/>
            <person name="Brusic V."/>
            <person name="Quackenbush J."/>
            <person name="Wahlestedt C."/>
            <person name="Mattick J.S."/>
            <person name="Hume D.A."/>
            <person name="Kai C."/>
            <person name="Sasaki D."/>
            <person name="Tomaru Y."/>
            <person name="Fukuda S."/>
            <person name="Kanamori-Katayama M."/>
            <person name="Suzuki M."/>
            <person name="Aoki J."/>
            <person name="Arakawa T."/>
            <person name="Iida J."/>
            <person name="Imamura K."/>
            <person name="Itoh M."/>
            <person name="Kato T."/>
            <person name="Kawaji H."/>
            <person name="Kawagashira N."/>
            <person name="Kawashima T."/>
            <person name="Kojima M."/>
            <person name="Kondo S."/>
            <person name="Konno H."/>
            <person name="Nakano K."/>
            <person name="Ninomiya N."/>
            <person name="Nishio T."/>
            <person name="Okada M."/>
            <person name="Plessy C."/>
            <person name="Shibata K."/>
            <person name="Shiraki T."/>
            <person name="Suzuki S."/>
            <person name="Tagami M."/>
            <person name="Waki K."/>
            <person name="Watahiki A."/>
            <person name="Okamura-Oho Y."/>
            <person name="Suzuki H."/>
            <person name="Kawai J."/>
            <person name="Hayashizaki Y."/>
        </authorList>
    </citation>
    <scope>NUCLEOTIDE SEQUENCE [LARGE SCALE MRNA]</scope>
    <source>
        <strain>C57BL/6J</strain>
        <tissue>Brain</tissue>
        <tissue>Cerebellum</tissue>
        <tissue>Urinary bladder</tissue>
    </source>
</reference>
<reference key="3">
    <citation type="journal article" date="2010" name="Cell">
        <title>A tissue-specific atlas of mouse protein phosphorylation and expression.</title>
        <authorList>
            <person name="Huttlin E.L."/>
            <person name="Jedrychowski M.P."/>
            <person name="Elias J.E."/>
            <person name="Goswami T."/>
            <person name="Rad R."/>
            <person name="Beausoleil S.A."/>
            <person name="Villen J."/>
            <person name="Haas W."/>
            <person name="Sowa M.E."/>
            <person name="Gygi S.P."/>
        </authorList>
    </citation>
    <scope>PHOSPHORYLATION [LARGE SCALE ANALYSIS] AT SER-942; SER-947; SER-1040; SER-1431; SER-1435; SER-2413 AND SER-2415</scope>
    <scope>IDENTIFICATION BY MASS SPECTROMETRY [LARGE SCALE ANALYSIS]</scope>
    <source>
        <tissue>Brain</tissue>
        <tissue>Brown adipose tissue</tissue>
        <tissue>Heart</tissue>
        <tissue>Kidney</tissue>
        <tissue>Lung</tissue>
        <tissue>Pancreas</tissue>
        <tissue>Spleen</tissue>
    </source>
</reference>
<comment type="function">
    <text evidence="1 7">Specifically binds to the DNA sequence 5'-GGGACTTTCC-3' which is found in the enhancer elements of numerous viral promoters such as those of SV40, CMV, or HIV1. In addition, related sequences are found in the enhancer elements of a number of cellular promoters, including those of the class I MHC, interleukin-2 receptor, somatostatin receptor II, and interferon-beta genes. It may act in T-cell activation (By similarity).</text>
</comment>
<comment type="subunit">
    <text evidence="7">Interacts with TCF4.</text>
</comment>
<comment type="subcellular location">
    <subcellularLocation>
        <location>Nucleus</location>
    </subcellularLocation>
</comment>
<comment type="tissue specificity">
    <text evidence="7">Expressed in heart, lung, skeletal muscle and liver. In the brain expressed in cerebral cortex, hippocampus, corpora amygdala and cerebellar cortex.</text>
</comment>
<comment type="developmental stage">
    <text evidence="7">At 13.5 dpc and 15.5 dpc expressed in anterior neural tube over primordial frontal cortex, spinal cord, dorsal root glanglia and developing skeletal muscle.</text>
</comment>
<sequence>MDTGDTALGQKATSRSGETDSVSGRWRQEQSAVLKMSTFSSQEGPRQPQIDPEQIGNAASAQLFGSGKLASPGEGLHQVTEKQYPPHRPSPYPCQHSLSFPQHSLSQGMTHSHKPHQSLEGPPWLFPGPLPSVASEDLFPFPMHGHSGGYPRKKISNLNPAYSQYSQKSIEQAEDAHKKEHKPKKPGKYICPYCSRACAKPSVLKKHIRSHTGERPYPCIPCGFSFKTKSNLYKHRKSHAHAIKAGLVPFTESSVSKLDLEAGFIDVEAEIHSDGEQSTDTDEESSLFAEASDKVSPGPPVPLDIASRGGYHGSLEESLGGPMKVPILIIPKSGIPLASEGSQYLSSEMLPNPSLNAKADDSHTVKQKLALRLSEKKGQDSEPSLNLLSPHSKGSTDSGYFSRSESAEQQISPPNTNAKSYEEIIFGKYCRLSPRNTLSVTPTGQERTAMGRRGIMEPLPHLNTRLEVKMFEDPISQLNPSKGEMDPGQINMLKTTKFNSECRQPQAIPSSVRNEGKPYPGNFLGSNPMLLEAPVDSSPLIRSNSMPTSSATNLSVPPSLRGSHSFDERMTGSDDVFYPGTVGIPPQRMLRRQAAFELPSVQEGHMESEHPARVSKGLASPSLKEKKLLPGDRPGYDYDVCRKPYKKWEDSETLKQSYLGSFKQGGEYFMDPSVPVQGVPTMFGTTCENRKRRKEKSVGDEEDVPMICGGMGNAPVGMMSSEYDPKLQDGGRSGFAMTAHESLAHGHSDRLDPARPQLPSRSPSLGSEDLPLAADPDKMTDLGKKPPGNVISVIQHTNSLSRPNSFERSESTEMVACPQDKTPSPAETCDSEVLEAPVSPEWAPPGDGGESGSKPTPSQQVPQHSYHAQPRLVRQHNIQVPEIRVTEEPDKPEKEKEAPTKEPEKPVEEFQWPQRSETLSQLPAEKLPPKKKRLRLADLEHSSGESSFESTGTGLSRSPSQESNLSHSSSFSMSFDREETVKLTAPPKQDESGKHSEFLTVPAGSYSLSVPGHHHQKEMRRCSSEQMPCPHPTEVPEIRSKSFDYGNLSHAPVAGTSPSTLSPSRERKKCFLVRQASFSGSPEIAQGEAGVDPSVKQEHMEHLHAGLRAAWSSVLPPLPGDDPGKQVGTCGPLSSGPPLHLTQQQIMHMDSQESLRNPLIQPTSYMTSKHLPEQPHLFPHQDAVPFSPIQNALFQFQYPTVCMVHLPAQQPPWWQTHFPHPFAPHPQNSYSKPPFQADLHSSYPLEHVAEHTGKKSADYPHAKEQTYPCYSGTSGLHSKNLPLKFPSDPGSKSTETPTEQLLREDFASENAGPLQSLPGTVVPVRIQTHVPSYGSVMYTSISQILGQNSPAIVICKVDENMTQRTLVTNAAMQGIGLNIAQVLGQHTGLEKYPLWKVPQTLPLGLESSIPLCLPSTSDNAASLGGSKRMLSPASSLELFMETKQQKRVKEEKMYGQIVEELSAVELTNSDIKKGLSRPQKPQLVRQGCASEPKDGCFQSRSSSFSSLSPSSSQDHPSASGPFPPNREILPGSRAPPRRKFSGPSESRESSDELDMDETSSDMSMSPQSSALPTGGGQQEEEGKARKLPVSMLVHMASGPGGNVANSTLLFTDVADFQQILQFPSLRTTTTVSWCFLNYTKPSFVQQATFKSSVYASWCISSCNPNPSGLNTKTTLALLRSKQKITAEIYTLAAMHRPGAGKLTSSSVWKQFAQMKPDAPFLFGNKLERKLAGNVLKERGKGEIHGDKDLGSKQTEPIRIKIFEGGYKSNEDYVYVRGRGRGKYICEECGIRCKKPSMLKKHIRTHTDVRPYVCKLCNFAFKTKGNLTKHMKSKAHMKKCLELGVSMTSVDDTETEEAENMEELHKTSEKHSMSGISTDHQFSDAEESDGEDGDDNDDDDEDDDDFDDQGDLTPKTRSRSTSPQPPRFSSLPVNVGAVAHGVPSDSSLGHSSLISYLVTLPSIQVTQLMTPSDSCDDTQMTEYQRLFQSKSTDSEPDKDRLDIPSSMDEEAMLSSEPSSSPRDFSPSSYRSSPGYDSSPCRDNSPKRYLIPKGDLSPRRHLSPRRDLSPMRHLSPRKEAALRREMSQGDASPRRHLSPRRPLSPGKDITARRDLSPRRERRYMTTIRAPSPRRALYPNPPLSMGQYLQTEPIVLGPPNLRRGIPQVPYFSLYGDQEGAYEHHGSSLFPEGPTDYVFSHLPLHSQQQVRAPIPMVPVGGIQMVHSLPPALSGLHPPPTLPLPTEGSEEKKGAPGEAFAKDPYILSRRHEKQAPQVLQSSGLPSSPSSPRLLMKQSTSEDSLNSTEREQEENIQTCTKAIASLRIATEEAALLGADPPTWVQESPQKPLESAHVSIRHFGGPEPGQPCTSAAHPDLHDGEKDTFGTSQTAVAHPTFYSKSSVDEKRVDFQSSKELSLSTEEGNEPSPEKNQLH</sequence>
<gene>
    <name type="primary">Hivep2</name>
    <name type="synonym">Mibp1</name>
</gene>
<dbReference type="EMBL" id="Y15907">
    <property type="protein sequence ID" value="CAA75868.1"/>
    <property type="molecule type" value="mRNA"/>
</dbReference>
<dbReference type="EMBL" id="AK137291">
    <property type="protein sequence ID" value="BAE23294.1"/>
    <property type="molecule type" value="mRNA"/>
</dbReference>
<dbReference type="EMBL" id="AK137384">
    <property type="protein sequence ID" value="BAE23336.1"/>
    <property type="molecule type" value="mRNA"/>
</dbReference>
<dbReference type="EMBL" id="AK147244">
    <property type="protein sequence ID" value="BAE27792.1"/>
    <property type="molecule type" value="mRNA"/>
</dbReference>
<dbReference type="EMBL" id="AK147419">
    <property type="protein sequence ID" value="BAE27900.1"/>
    <property type="molecule type" value="mRNA"/>
</dbReference>
<dbReference type="CCDS" id="CCDS23704.1"/>
<dbReference type="RefSeq" id="NP_001345711.1">
    <property type="nucleotide sequence ID" value="NM_001358782.1"/>
</dbReference>
<dbReference type="RefSeq" id="NP_001345712.1">
    <property type="nucleotide sequence ID" value="NM_001358783.1"/>
</dbReference>
<dbReference type="RefSeq" id="NP_034567.2">
    <property type="nucleotide sequence ID" value="NM_010437.2"/>
</dbReference>
<dbReference type="RefSeq" id="XP_006512619.1">
    <property type="nucleotide sequence ID" value="XM_006512556.3"/>
</dbReference>
<dbReference type="RefSeq" id="XP_006512621.1">
    <property type="nucleotide sequence ID" value="XM_006512558.4"/>
</dbReference>
<dbReference type="RefSeq" id="XP_006512622.1">
    <property type="nucleotide sequence ID" value="XM_006512559.4"/>
</dbReference>
<dbReference type="RefSeq" id="XP_006512624.1">
    <property type="nucleotide sequence ID" value="XM_006512561.3"/>
</dbReference>
<dbReference type="RefSeq" id="XP_011241431.1">
    <property type="nucleotide sequence ID" value="XM_011243129.4"/>
</dbReference>
<dbReference type="RefSeq" id="XP_011241432.1">
    <property type="nucleotide sequence ID" value="XM_011243130.2"/>
</dbReference>
<dbReference type="RefSeq" id="XP_011241433.1">
    <property type="nucleotide sequence ID" value="XM_011243131.4"/>
</dbReference>
<dbReference type="RefSeq" id="XP_011241434.1">
    <property type="nucleotide sequence ID" value="XM_011243132.4"/>
</dbReference>
<dbReference type="RefSeq" id="XP_011241435.1">
    <property type="nucleotide sequence ID" value="XM_011243133.2"/>
</dbReference>
<dbReference type="RefSeq" id="XP_017169296.1">
    <property type="nucleotide sequence ID" value="XM_017313807.1"/>
</dbReference>
<dbReference type="RefSeq" id="XP_017169297.1">
    <property type="nucleotide sequence ID" value="XM_017313808.1"/>
</dbReference>
<dbReference type="RefSeq" id="XP_017169298.1">
    <property type="nucleotide sequence ID" value="XM_017313809.1"/>
</dbReference>
<dbReference type="RefSeq" id="XP_030100753.1">
    <property type="nucleotide sequence ID" value="XM_030244893.1"/>
</dbReference>
<dbReference type="RefSeq" id="XP_030100754.1">
    <property type="nucleotide sequence ID" value="XM_030244894.2"/>
</dbReference>
<dbReference type="RefSeq" id="XP_030100756.1">
    <property type="nucleotide sequence ID" value="XM_030244896.2"/>
</dbReference>
<dbReference type="RefSeq" id="XP_030100757.1">
    <property type="nucleotide sequence ID" value="XM_030244897.2"/>
</dbReference>
<dbReference type="RefSeq" id="XP_030100758.1">
    <property type="nucleotide sequence ID" value="XM_030244898.2"/>
</dbReference>
<dbReference type="RefSeq" id="XP_030100759.1">
    <property type="nucleotide sequence ID" value="XM_030244899.2"/>
</dbReference>
<dbReference type="RefSeq" id="XP_030100760.1">
    <property type="nucleotide sequence ID" value="XM_030244900.2"/>
</dbReference>
<dbReference type="RefSeq" id="XP_030100761.1">
    <property type="nucleotide sequence ID" value="XM_030244901.2"/>
</dbReference>
<dbReference type="RefSeq" id="XP_030100762.1">
    <property type="nucleotide sequence ID" value="XM_030244902.2"/>
</dbReference>
<dbReference type="RefSeq" id="XP_030100763.1">
    <property type="nucleotide sequence ID" value="XM_030244903.2"/>
</dbReference>
<dbReference type="RefSeq" id="XP_036011517.1">
    <property type="nucleotide sequence ID" value="XM_036155624.1"/>
</dbReference>
<dbReference type="RefSeq" id="XP_036011518.1">
    <property type="nucleotide sequence ID" value="XM_036155625.1"/>
</dbReference>
<dbReference type="RefSeq" id="XP_036011519.1">
    <property type="nucleotide sequence ID" value="XM_036155626.1"/>
</dbReference>
<dbReference type="RefSeq" id="XP_036011520.1">
    <property type="nucleotide sequence ID" value="XM_036155627.1"/>
</dbReference>
<dbReference type="RefSeq" id="XP_036011521.1">
    <property type="nucleotide sequence ID" value="XM_036155628.1"/>
</dbReference>
<dbReference type="RefSeq" id="XP_036011522.1">
    <property type="nucleotide sequence ID" value="XM_036155629.1"/>
</dbReference>
<dbReference type="RefSeq" id="XP_036011523.1">
    <property type="nucleotide sequence ID" value="XM_036155630.1"/>
</dbReference>
<dbReference type="RefSeq" id="XP_036011524.1">
    <property type="nucleotide sequence ID" value="XM_036155631.1"/>
</dbReference>
<dbReference type="RefSeq" id="XP_036011525.1">
    <property type="nucleotide sequence ID" value="XM_036155632.1"/>
</dbReference>
<dbReference type="RefSeq" id="XP_036011526.1">
    <property type="nucleotide sequence ID" value="XM_036155633.1"/>
</dbReference>
<dbReference type="RefSeq" id="XP_036011527.1">
    <property type="nucleotide sequence ID" value="XM_036155634.1"/>
</dbReference>
<dbReference type="RefSeq" id="XP_036011528.1">
    <property type="nucleotide sequence ID" value="XM_036155635.1"/>
</dbReference>
<dbReference type="RefSeq" id="XP_036011529.1">
    <property type="nucleotide sequence ID" value="XM_036155636.1"/>
</dbReference>
<dbReference type="RefSeq" id="XP_036011530.1">
    <property type="nucleotide sequence ID" value="XM_036155637.1"/>
</dbReference>
<dbReference type="RefSeq" id="XP_036011531.1">
    <property type="nucleotide sequence ID" value="XM_036155638.1"/>
</dbReference>
<dbReference type="RefSeq" id="XP_036011532.1">
    <property type="nucleotide sequence ID" value="XM_036155639.1"/>
</dbReference>
<dbReference type="RefSeq" id="XP_036011533.1">
    <property type="nucleotide sequence ID" value="XM_036155640.1"/>
</dbReference>
<dbReference type="RefSeq" id="XP_036011534.1">
    <property type="nucleotide sequence ID" value="XM_036155641.1"/>
</dbReference>
<dbReference type="RefSeq" id="XP_036011535.1">
    <property type="nucleotide sequence ID" value="XM_036155642.1"/>
</dbReference>
<dbReference type="RefSeq" id="XP_036011536.1">
    <property type="nucleotide sequence ID" value="XM_036155643.1"/>
</dbReference>
<dbReference type="SMR" id="Q3UHF7"/>
<dbReference type="BioGRID" id="200314">
    <property type="interactions" value="4"/>
</dbReference>
<dbReference type="FunCoup" id="Q3UHF7">
    <property type="interactions" value="1761"/>
</dbReference>
<dbReference type="IntAct" id="Q3UHF7">
    <property type="interactions" value="1"/>
</dbReference>
<dbReference type="STRING" id="10090.ENSMUSP00000140150"/>
<dbReference type="GlyGen" id="Q3UHF7">
    <property type="glycosylation" value="21 sites, 1 O-linked glycan (19 sites)"/>
</dbReference>
<dbReference type="iPTMnet" id="Q3UHF7"/>
<dbReference type="PhosphoSitePlus" id="Q3UHF7"/>
<dbReference type="SwissPalm" id="Q3UHF7"/>
<dbReference type="jPOST" id="Q3UHF7"/>
<dbReference type="PaxDb" id="10090-ENSMUSP00000015645"/>
<dbReference type="ProteomicsDB" id="274977"/>
<dbReference type="Antibodypedia" id="46676">
    <property type="antibodies" value="41 antibodies from 17 providers"/>
</dbReference>
<dbReference type="DNASU" id="15273"/>
<dbReference type="Ensembl" id="ENSMUST00000015645.11">
    <property type="protein sequence ID" value="ENSMUSP00000015645.5"/>
    <property type="gene ID" value="ENSMUSG00000015501.11"/>
</dbReference>
<dbReference type="Ensembl" id="ENSMUST00000187083.7">
    <property type="protein sequence ID" value="ENSMUSP00000140290.2"/>
    <property type="gene ID" value="ENSMUSG00000015501.11"/>
</dbReference>
<dbReference type="Ensembl" id="ENSMUST00000191138.7">
    <property type="protein sequence ID" value="ENSMUSP00000140150.2"/>
    <property type="gene ID" value="ENSMUSG00000015501.11"/>
</dbReference>
<dbReference type="GeneID" id="15273"/>
<dbReference type="KEGG" id="mmu:15273"/>
<dbReference type="UCSC" id="uc007elg.1">
    <property type="organism name" value="mouse"/>
</dbReference>
<dbReference type="AGR" id="MGI:1338076"/>
<dbReference type="CTD" id="3097"/>
<dbReference type="MGI" id="MGI:1338076">
    <property type="gene designation" value="Hivep2"/>
</dbReference>
<dbReference type="VEuPathDB" id="HostDB:ENSMUSG00000015501"/>
<dbReference type="eggNOG" id="KOG1721">
    <property type="taxonomic scope" value="Eukaryota"/>
</dbReference>
<dbReference type="GeneTree" id="ENSGT00940000156512"/>
<dbReference type="HOGENOM" id="CLU_000719_0_0_1"/>
<dbReference type="InParanoid" id="Q3UHF7"/>
<dbReference type="OMA" id="EHHGRMS"/>
<dbReference type="OrthoDB" id="10042249at2759"/>
<dbReference type="PhylomeDB" id="Q3UHF7"/>
<dbReference type="TreeFam" id="TF331837"/>
<dbReference type="BioGRID-ORCS" id="15273">
    <property type="hits" value="7 hits in 79 CRISPR screens"/>
</dbReference>
<dbReference type="ChiTaRS" id="Hivep2">
    <property type="organism name" value="mouse"/>
</dbReference>
<dbReference type="PRO" id="PR:Q3UHF7"/>
<dbReference type="Proteomes" id="UP000000589">
    <property type="component" value="Chromosome 10"/>
</dbReference>
<dbReference type="RNAct" id="Q3UHF7">
    <property type="molecule type" value="protein"/>
</dbReference>
<dbReference type="Bgee" id="ENSMUSG00000015501">
    <property type="expression patterns" value="Expressed in primary motor cortex and 256 other cell types or tissues"/>
</dbReference>
<dbReference type="ExpressionAtlas" id="Q3UHF7">
    <property type="expression patterns" value="baseline and differential"/>
</dbReference>
<dbReference type="GO" id="GO:0005654">
    <property type="term" value="C:nucleoplasm"/>
    <property type="evidence" value="ECO:0007669"/>
    <property type="project" value="Ensembl"/>
</dbReference>
<dbReference type="GO" id="GO:0005667">
    <property type="term" value="C:transcription regulator complex"/>
    <property type="evidence" value="ECO:0000304"/>
    <property type="project" value="MGI"/>
</dbReference>
<dbReference type="GO" id="GO:0003677">
    <property type="term" value="F:DNA binding"/>
    <property type="evidence" value="ECO:0007669"/>
    <property type="project" value="UniProtKB-KW"/>
</dbReference>
<dbReference type="GO" id="GO:0003700">
    <property type="term" value="F:DNA-binding transcription factor activity"/>
    <property type="evidence" value="ECO:0000304"/>
    <property type="project" value="MGI"/>
</dbReference>
<dbReference type="GO" id="GO:0046872">
    <property type="term" value="F:metal ion binding"/>
    <property type="evidence" value="ECO:0000304"/>
    <property type="project" value="MGI"/>
</dbReference>
<dbReference type="GO" id="GO:0008270">
    <property type="term" value="F:zinc ion binding"/>
    <property type="evidence" value="ECO:0007669"/>
    <property type="project" value="UniProtKB-KW"/>
</dbReference>
<dbReference type="GO" id="GO:0006351">
    <property type="term" value="P:DNA-templated transcription"/>
    <property type="evidence" value="ECO:0000304"/>
    <property type="project" value="MGI"/>
</dbReference>
<dbReference type="GO" id="GO:0007165">
    <property type="term" value="P:signal transduction"/>
    <property type="evidence" value="ECO:0000304"/>
    <property type="project" value="MGI"/>
</dbReference>
<dbReference type="FunFam" id="3.30.160.60:FF:000033">
    <property type="entry name" value="Immunodeficiency virus type I enhancer binding protein 1"/>
    <property type="match status" value="2"/>
</dbReference>
<dbReference type="FunFam" id="3.30.160.60:FF:000594">
    <property type="entry name" value="Transcription factor HIVEP2"/>
    <property type="match status" value="1"/>
</dbReference>
<dbReference type="Gene3D" id="3.30.160.60">
    <property type="entry name" value="Classic Zinc Finger"/>
    <property type="match status" value="4"/>
</dbReference>
<dbReference type="InterPro" id="IPR051969">
    <property type="entry name" value="Zinc-finger_DNA-bd_regulators"/>
</dbReference>
<dbReference type="InterPro" id="IPR036236">
    <property type="entry name" value="Znf_C2H2_sf"/>
</dbReference>
<dbReference type="InterPro" id="IPR013087">
    <property type="entry name" value="Znf_C2H2_type"/>
</dbReference>
<dbReference type="PANTHER" id="PTHR45944">
    <property type="entry name" value="SCHNURRI, ISOFORM F"/>
    <property type="match status" value="1"/>
</dbReference>
<dbReference type="PANTHER" id="PTHR45944:SF1">
    <property type="entry name" value="TRANSCRIPTION FACTOR HIVEP2"/>
    <property type="match status" value="1"/>
</dbReference>
<dbReference type="Pfam" id="PF00096">
    <property type="entry name" value="zf-C2H2"/>
    <property type="match status" value="3"/>
</dbReference>
<dbReference type="SMART" id="SM00355">
    <property type="entry name" value="ZnF_C2H2"/>
    <property type="match status" value="4"/>
</dbReference>
<dbReference type="SUPFAM" id="SSF57667">
    <property type="entry name" value="beta-beta-alpha zinc fingers"/>
    <property type="match status" value="2"/>
</dbReference>
<dbReference type="PROSITE" id="PS00028">
    <property type="entry name" value="ZINC_FINGER_C2H2_1"/>
    <property type="match status" value="4"/>
</dbReference>
<dbReference type="PROSITE" id="PS50157">
    <property type="entry name" value="ZINC_FINGER_C2H2_2"/>
    <property type="match status" value="4"/>
</dbReference>
<organism>
    <name type="scientific">Mus musculus</name>
    <name type="common">Mouse</name>
    <dbReference type="NCBI Taxonomy" id="10090"/>
    <lineage>
        <taxon>Eukaryota</taxon>
        <taxon>Metazoa</taxon>
        <taxon>Chordata</taxon>
        <taxon>Craniata</taxon>
        <taxon>Vertebrata</taxon>
        <taxon>Euteleostomi</taxon>
        <taxon>Mammalia</taxon>
        <taxon>Eutheria</taxon>
        <taxon>Euarchontoglires</taxon>
        <taxon>Glires</taxon>
        <taxon>Rodentia</taxon>
        <taxon>Myomorpha</taxon>
        <taxon>Muroidea</taxon>
        <taxon>Muridae</taxon>
        <taxon>Murinae</taxon>
        <taxon>Mus</taxon>
        <taxon>Mus</taxon>
    </lineage>
</organism>
<evidence type="ECO:0000250" key="1"/>
<evidence type="ECO:0000250" key="2">
    <source>
        <dbReference type="UniProtKB" id="P31629"/>
    </source>
</evidence>
<evidence type="ECO:0000250" key="3">
    <source>
        <dbReference type="UniProtKB" id="Q00900"/>
    </source>
</evidence>
<evidence type="ECO:0000255" key="4"/>
<evidence type="ECO:0000255" key="5">
    <source>
        <dbReference type="PROSITE-ProRule" id="PRU00042"/>
    </source>
</evidence>
<evidence type="ECO:0000256" key="6">
    <source>
        <dbReference type="SAM" id="MobiDB-lite"/>
    </source>
</evidence>
<evidence type="ECO:0000269" key="7">
    <source>
    </source>
</evidence>
<evidence type="ECO:0000305" key="8"/>
<evidence type="ECO:0007744" key="9">
    <source>
    </source>
</evidence>
<proteinExistence type="evidence at protein level"/>